<feature type="chain" id="PRO_1000096596" description="Uracil-DNA glycosylase">
    <location>
        <begin position="1"/>
        <end position="219"/>
    </location>
</feature>
<feature type="active site" description="Proton acceptor" evidence="1">
    <location>
        <position position="61"/>
    </location>
</feature>
<evidence type="ECO:0000255" key="1">
    <source>
        <dbReference type="HAMAP-Rule" id="MF_00148"/>
    </source>
</evidence>
<dbReference type="EC" id="3.2.2.27" evidence="1"/>
<dbReference type="EMBL" id="CP001050">
    <property type="protein sequence ID" value="ACF29703.1"/>
    <property type="molecule type" value="Genomic_DNA"/>
</dbReference>
<dbReference type="RefSeq" id="WP_003688628.1">
    <property type="nucleotide sequence ID" value="NC_011035.1"/>
</dbReference>
<dbReference type="SMR" id="B4RLL6"/>
<dbReference type="GeneID" id="66753125"/>
<dbReference type="KEGG" id="ngk:NGK_1026"/>
<dbReference type="HOGENOM" id="CLU_032162_3_0_4"/>
<dbReference type="Proteomes" id="UP000002564">
    <property type="component" value="Chromosome"/>
</dbReference>
<dbReference type="GO" id="GO:0005737">
    <property type="term" value="C:cytoplasm"/>
    <property type="evidence" value="ECO:0007669"/>
    <property type="project" value="UniProtKB-SubCell"/>
</dbReference>
<dbReference type="GO" id="GO:0004844">
    <property type="term" value="F:uracil DNA N-glycosylase activity"/>
    <property type="evidence" value="ECO:0007669"/>
    <property type="project" value="UniProtKB-UniRule"/>
</dbReference>
<dbReference type="GO" id="GO:0097510">
    <property type="term" value="P:base-excision repair, AP site formation via deaminated base removal"/>
    <property type="evidence" value="ECO:0007669"/>
    <property type="project" value="TreeGrafter"/>
</dbReference>
<dbReference type="CDD" id="cd10027">
    <property type="entry name" value="UDG-F1-like"/>
    <property type="match status" value="1"/>
</dbReference>
<dbReference type="FunFam" id="3.40.470.10:FF:000001">
    <property type="entry name" value="Uracil-DNA glycosylase"/>
    <property type="match status" value="1"/>
</dbReference>
<dbReference type="Gene3D" id="3.40.470.10">
    <property type="entry name" value="Uracil-DNA glycosylase-like domain"/>
    <property type="match status" value="1"/>
</dbReference>
<dbReference type="HAMAP" id="MF_00148">
    <property type="entry name" value="UDG"/>
    <property type="match status" value="1"/>
</dbReference>
<dbReference type="InterPro" id="IPR002043">
    <property type="entry name" value="UDG_fam1"/>
</dbReference>
<dbReference type="InterPro" id="IPR018085">
    <property type="entry name" value="Ura-DNA_Glyclase_AS"/>
</dbReference>
<dbReference type="InterPro" id="IPR005122">
    <property type="entry name" value="Uracil-DNA_glycosylase-like"/>
</dbReference>
<dbReference type="InterPro" id="IPR036895">
    <property type="entry name" value="Uracil-DNA_glycosylase-like_sf"/>
</dbReference>
<dbReference type="NCBIfam" id="NF003588">
    <property type="entry name" value="PRK05254.1-1"/>
    <property type="match status" value="1"/>
</dbReference>
<dbReference type="NCBIfam" id="NF003589">
    <property type="entry name" value="PRK05254.1-2"/>
    <property type="match status" value="1"/>
</dbReference>
<dbReference type="NCBIfam" id="NF003591">
    <property type="entry name" value="PRK05254.1-4"/>
    <property type="match status" value="1"/>
</dbReference>
<dbReference type="NCBIfam" id="NF003592">
    <property type="entry name" value="PRK05254.1-5"/>
    <property type="match status" value="1"/>
</dbReference>
<dbReference type="NCBIfam" id="TIGR00628">
    <property type="entry name" value="ung"/>
    <property type="match status" value="1"/>
</dbReference>
<dbReference type="PANTHER" id="PTHR11264">
    <property type="entry name" value="URACIL-DNA GLYCOSYLASE"/>
    <property type="match status" value="1"/>
</dbReference>
<dbReference type="PANTHER" id="PTHR11264:SF0">
    <property type="entry name" value="URACIL-DNA GLYCOSYLASE"/>
    <property type="match status" value="1"/>
</dbReference>
<dbReference type="Pfam" id="PF03167">
    <property type="entry name" value="UDG"/>
    <property type="match status" value="1"/>
</dbReference>
<dbReference type="SMART" id="SM00986">
    <property type="entry name" value="UDG"/>
    <property type="match status" value="1"/>
</dbReference>
<dbReference type="SMART" id="SM00987">
    <property type="entry name" value="UreE_C"/>
    <property type="match status" value="1"/>
</dbReference>
<dbReference type="SUPFAM" id="SSF52141">
    <property type="entry name" value="Uracil-DNA glycosylase-like"/>
    <property type="match status" value="1"/>
</dbReference>
<dbReference type="PROSITE" id="PS00130">
    <property type="entry name" value="U_DNA_GLYCOSYLASE"/>
    <property type="match status" value="1"/>
</dbReference>
<name>UNG_NEIG2</name>
<gene>
    <name evidence="1" type="primary">ung</name>
    <name type="ordered locus">NGK_1026</name>
</gene>
<sequence length="219" mass="24688">MDTWHDALGGEKQQPYFQEILNAVRQERLSGQIIYPPEADVFNAFRLTAFDRVKVVILGQDPYHGVGQAHGLAFSVRQGVRIPPSLLNIYKELETDIEGFSIPAHGCLTAWAEQGILLLNTVLTVRAGQAHSHALLGWERFTDTVIRQLATHRKHLVFMLWGGYAQQKGRLIDSQNHLILTAPHPSPLSAYRGFFGCRHFSQANSYLSQHGIEPINWKL</sequence>
<reference key="1">
    <citation type="journal article" date="2008" name="J. Bacteriol.">
        <title>Complete genome sequence of Neisseria gonorrhoeae NCCP11945.</title>
        <authorList>
            <person name="Chung G.T."/>
            <person name="Yoo J.S."/>
            <person name="Oh H.B."/>
            <person name="Lee Y.S."/>
            <person name="Cha S.H."/>
            <person name="Kim S.J."/>
            <person name="Yoo C.K."/>
        </authorList>
    </citation>
    <scope>NUCLEOTIDE SEQUENCE [LARGE SCALE GENOMIC DNA]</scope>
    <source>
        <strain>NCCP11945</strain>
    </source>
</reference>
<proteinExistence type="inferred from homology"/>
<organism>
    <name type="scientific">Neisseria gonorrhoeae (strain NCCP11945)</name>
    <dbReference type="NCBI Taxonomy" id="521006"/>
    <lineage>
        <taxon>Bacteria</taxon>
        <taxon>Pseudomonadati</taxon>
        <taxon>Pseudomonadota</taxon>
        <taxon>Betaproteobacteria</taxon>
        <taxon>Neisseriales</taxon>
        <taxon>Neisseriaceae</taxon>
        <taxon>Neisseria</taxon>
    </lineage>
</organism>
<comment type="function">
    <text evidence="1">Excises uracil residues from the DNA which can arise as a result of misincorporation of dUMP residues by DNA polymerase or due to deamination of cytosine.</text>
</comment>
<comment type="catalytic activity">
    <reaction evidence="1">
        <text>Hydrolyzes single-stranded DNA or mismatched double-stranded DNA and polynucleotides, releasing free uracil.</text>
        <dbReference type="EC" id="3.2.2.27"/>
    </reaction>
</comment>
<comment type="subcellular location">
    <subcellularLocation>
        <location evidence="1">Cytoplasm</location>
    </subcellularLocation>
</comment>
<comment type="similarity">
    <text evidence="1">Belongs to the uracil-DNA glycosylase (UDG) superfamily. UNG family.</text>
</comment>
<protein>
    <recommendedName>
        <fullName evidence="1">Uracil-DNA glycosylase</fullName>
        <shortName evidence="1">UDG</shortName>
        <ecNumber evidence="1">3.2.2.27</ecNumber>
    </recommendedName>
</protein>
<keyword id="KW-0963">Cytoplasm</keyword>
<keyword id="KW-0227">DNA damage</keyword>
<keyword id="KW-0234">DNA repair</keyword>
<keyword id="KW-0378">Hydrolase</keyword>
<accession>B4RLL6</accession>